<protein>
    <recommendedName>
        <fullName evidence="2">Bifunctional uridylyltransferase/uridylyl-removing enzyme</fullName>
        <shortName evidence="2">UTase/UR</shortName>
    </recommendedName>
    <alternativeName>
        <fullName evidence="2">Bifunctional [protein-PII] modification enzyme</fullName>
    </alternativeName>
    <alternativeName>
        <fullName evidence="2">Bifunctional nitrogen sensor protein</fullName>
    </alternativeName>
    <domain>
        <recommendedName>
            <fullName evidence="2">[Protein-PII] uridylyltransferase</fullName>
            <shortName evidence="2">PII uridylyltransferase</shortName>
            <shortName evidence="2">UTase</shortName>
            <ecNumber evidence="2">2.7.7.59</ecNumber>
        </recommendedName>
    </domain>
    <domain>
        <recommendedName>
            <fullName evidence="2">[Protein-PII]-UMP uridylyl-removing enzyme</fullName>
            <shortName evidence="2">UR</shortName>
            <ecNumber evidence="2">3.1.4.-</ecNumber>
        </recommendedName>
    </domain>
</protein>
<evidence type="ECO:0000250" key="1"/>
<evidence type="ECO:0000255" key="2">
    <source>
        <dbReference type="HAMAP-Rule" id="MF_00277"/>
    </source>
</evidence>
<evidence type="ECO:0000255" key="3">
    <source>
        <dbReference type="PROSITE-ProRule" id="PRU01175"/>
    </source>
</evidence>
<accession>P9WN28</accession>
<accession>L0TB10</accession>
<accession>Q10961</accession>
<organism>
    <name type="scientific">Mycobacterium tuberculosis (strain CDC 1551 / Oshkosh)</name>
    <dbReference type="NCBI Taxonomy" id="83331"/>
    <lineage>
        <taxon>Bacteria</taxon>
        <taxon>Bacillati</taxon>
        <taxon>Actinomycetota</taxon>
        <taxon>Actinomycetes</taxon>
        <taxon>Mycobacteriales</taxon>
        <taxon>Mycobacteriaceae</taxon>
        <taxon>Mycobacterium</taxon>
        <taxon>Mycobacterium tuberculosis complex</taxon>
    </lineage>
</organism>
<name>GLND_MYCTO</name>
<reference key="1">
    <citation type="journal article" date="2002" name="J. Bacteriol.">
        <title>Whole-genome comparison of Mycobacterium tuberculosis clinical and laboratory strains.</title>
        <authorList>
            <person name="Fleischmann R.D."/>
            <person name="Alland D."/>
            <person name="Eisen J.A."/>
            <person name="Carpenter L."/>
            <person name="White O."/>
            <person name="Peterson J.D."/>
            <person name="DeBoy R.T."/>
            <person name="Dodson R.J."/>
            <person name="Gwinn M.L."/>
            <person name="Haft D.H."/>
            <person name="Hickey E.K."/>
            <person name="Kolonay J.F."/>
            <person name="Nelson W.C."/>
            <person name="Umayam L.A."/>
            <person name="Ermolaeva M.D."/>
            <person name="Salzberg S.L."/>
            <person name="Delcher A."/>
            <person name="Utterback T.R."/>
            <person name="Weidman J.F."/>
            <person name="Khouri H.M."/>
            <person name="Gill J."/>
            <person name="Mikula A."/>
            <person name="Bishai W."/>
            <person name="Jacobs W.R. Jr."/>
            <person name="Venter J.C."/>
            <person name="Fraser C.M."/>
        </authorList>
    </citation>
    <scope>NUCLEOTIDE SEQUENCE [LARGE SCALE GENOMIC DNA]</scope>
    <source>
        <strain>CDC 1551 / Oshkosh</strain>
    </source>
</reference>
<sequence length="808" mass="86438">MEAESPCAASDLAVARRELLSGNHRELDPVGLRQTWLDLHESWLIDKADEIGIADASGFAIVGVGGLGRRELLPYSDLDVLLLHDGKPADILRPVADRLWYPLWDANIRLDHSVRTVSEALTIANSDLMAALGMLEARHIAGDQQLSFALIDGVRRQWRNGIRSRMGELVEMTYARWRRCGRIAQRAEPDLKLGRGGLRDVQLLDALALAQLIDRHGIGHTDLPAGSLDGAYRTLLDVRTELHRVSGRGRDHLLAQFADEISAALGFGDRFDLARTLSSAGRTIGYHAEAGLRTAANALPRRGISALVRRPKRRPLDEGVVEYAGEIVLARDAEPEHDPGLVLRVAAASADTGLPIGAATLSRLAASVPDLPTPWPQEALDDLLVVLSAGPTTVATIEALDRTGLWGRLLPEWEPIRDLPPRDVAHKWTVDRHVVETAVHAAPLATRVARPDLLALGALLHDIGKGRGTDHSVLGAELVIPVCTRLGLSPPDVRTLSKLVRHHLLLPITATRRDLNDPKTIEAVSEALGGDPQLLEVLHALSEADSKATGPGVWSDWKASLVDDLVRRCRMVMAGESLPQAEPTAPHYLSLAADHGVHVEISPRDGERIDAVIVAPDERGLVSKAAAVLALNSLRVHSASVNVHQGVAITEFVVSPLFGSPPAAELVRQQFVGALNGDVDVLGMLQKRDSDAASLVSARAGDVQAGVPVTRTAAPPRILWLDTAAPAKLILEVRAMDRAGLLALLAGALEGAGAGIVWAKVNTFGSTAADVFCVTVPAELDARAAVEQHLLEVLGASVDVVVDEPVGD</sequence>
<proteinExistence type="inferred from homology"/>
<keyword id="KW-0378">Hydrolase</keyword>
<keyword id="KW-0460">Magnesium</keyword>
<keyword id="KW-0511">Multifunctional enzyme</keyword>
<keyword id="KW-0548">Nucleotidyltransferase</keyword>
<keyword id="KW-1185">Reference proteome</keyword>
<keyword id="KW-0677">Repeat</keyword>
<keyword id="KW-0808">Transferase</keyword>
<comment type="function">
    <text evidence="1">Modifies, by uridylylation and deuridylylation, the PII regulatory protein (GlnB), in response to the nitrogen status of the cell that GlnD senses through the glutamine level. Under low glutamine levels, catalyzes the conversion of the PII protein and UTP to PII-UMP and PPi, while under higher glutamine levels, GlnD hydrolyzes PII-UMP to PII and UMP (deuridylylation). Thus, controls uridylylation state and activity of the PII protein, and plays an important role in the regulation of nitrogen assimilation and metabolism (By similarity).</text>
</comment>
<comment type="catalytic activity">
    <reaction evidence="2">
        <text>[protein-PII]-L-tyrosine + UTP = [protein-PII]-uridylyl-L-tyrosine + diphosphate</text>
        <dbReference type="Rhea" id="RHEA:13673"/>
        <dbReference type="Rhea" id="RHEA-COMP:12147"/>
        <dbReference type="Rhea" id="RHEA-COMP:12148"/>
        <dbReference type="ChEBI" id="CHEBI:33019"/>
        <dbReference type="ChEBI" id="CHEBI:46398"/>
        <dbReference type="ChEBI" id="CHEBI:46858"/>
        <dbReference type="ChEBI" id="CHEBI:90602"/>
        <dbReference type="EC" id="2.7.7.59"/>
    </reaction>
</comment>
<comment type="catalytic activity">
    <reaction evidence="2">
        <text>[protein-PII]-uridylyl-L-tyrosine + H2O = [protein-PII]-L-tyrosine + UMP + H(+)</text>
        <dbReference type="Rhea" id="RHEA:48600"/>
        <dbReference type="Rhea" id="RHEA-COMP:12147"/>
        <dbReference type="Rhea" id="RHEA-COMP:12148"/>
        <dbReference type="ChEBI" id="CHEBI:15377"/>
        <dbReference type="ChEBI" id="CHEBI:15378"/>
        <dbReference type="ChEBI" id="CHEBI:46858"/>
        <dbReference type="ChEBI" id="CHEBI:57865"/>
        <dbReference type="ChEBI" id="CHEBI:90602"/>
    </reaction>
</comment>
<comment type="cofactor">
    <cofactor evidence="2">
        <name>Mg(2+)</name>
        <dbReference type="ChEBI" id="CHEBI:18420"/>
    </cofactor>
</comment>
<comment type="domain">
    <text evidence="2">Has four distinct domains: an N-terminal nucleotidyltransferase (NT) domain responsible for UTase activity, a central HD domain that encodes UR activity, and two C-terminal ACT domains that seem to have a role in glutamine sensing.</text>
</comment>
<comment type="similarity">
    <text evidence="2">Belongs to the GlnD family.</text>
</comment>
<dbReference type="EC" id="2.7.7.59" evidence="2"/>
<dbReference type="EC" id="3.1.4.-" evidence="2"/>
<dbReference type="EMBL" id="AE000516">
    <property type="protein sequence ID" value="AAK47312.1"/>
    <property type="molecule type" value="Genomic_DNA"/>
</dbReference>
<dbReference type="PIR" id="F70747">
    <property type="entry name" value="F70747"/>
</dbReference>
<dbReference type="RefSeq" id="WP_003899539.1">
    <property type="nucleotide sequence ID" value="NZ_KK341227.1"/>
</dbReference>
<dbReference type="SMR" id="P9WN28"/>
<dbReference type="KEGG" id="mtc:MT2986"/>
<dbReference type="PATRIC" id="fig|83331.31.peg.3226"/>
<dbReference type="HOGENOM" id="CLU_012833_2_0_11"/>
<dbReference type="Proteomes" id="UP000001020">
    <property type="component" value="Chromosome"/>
</dbReference>
<dbReference type="GO" id="GO:0008773">
    <property type="term" value="F:[protein-PII] uridylyltransferase activity"/>
    <property type="evidence" value="ECO:0007669"/>
    <property type="project" value="UniProtKB-UniRule"/>
</dbReference>
<dbReference type="GO" id="GO:0008081">
    <property type="term" value="F:phosphoric diester hydrolase activity"/>
    <property type="evidence" value="ECO:0007669"/>
    <property type="project" value="UniProtKB-UniRule"/>
</dbReference>
<dbReference type="GO" id="GO:0006808">
    <property type="term" value="P:regulation of nitrogen utilization"/>
    <property type="evidence" value="ECO:0007669"/>
    <property type="project" value="UniProtKB-UniRule"/>
</dbReference>
<dbReference type="CDD" id="cd04873">
    <property type="entry name" value="ACT_UUR-ACR-like"/>
    <property type="match status" value="1"/>
</dbReference>
<dbReference type="CDD" id="cd00077">
    <property type="entry name" value="HDc"/>
    <property type="match status" value="1"/>
</dbReference>
<dbReference type="CDD" id="cd05401">
    <property type="entry name" value="NT_GlnE_GlnD_like"/>
    <property type="match status" value="1"/>
</dbReference>
<dbReference type="Gene3D" id="3.30.460.10">
    <property type="entry name" value="Beta Polymerase, domain 2"/>
    <property type="match status" value="1"/>
</dbReference>
<dbReference type="Gene3D" id="1.10.3090.10">
    <property type="entry name" value="cca-adding enzyme, domain 2"/>
    <property type="match status" value="1"/>
</dbReference>
<dbReference type="HAMAP" id="MF_00277">
    <property type="entry name" value="PII_uridylyl_transf"/>
    <property type="match status" value="1"/>
</dbReference>
<dbReference type="InterPro" id="IPR045865">
    <property type="entry name" value="ACT-like_dom_sf"/>
</dbReference>
<dbReference type="InterPro" id="IPR002912">
    <property type="entry name" value="ACT_dom"/>
</dbReference>
<dbReference type="InterPro" id="IPR003607">
    <property type="entry name" value="HD/PDEase_dom"/>
</dbReference>
<dbReference type="InterPro" id="IPR006674">
    <property type="entry name" value="HD_domain"/>
</dbReference>
<dbReference type="InterPro" id="IPR043519">
    <property type="entry name" value="NT_sf"/>
</dbReference>
<dbReference type="InterPro" id="IPR013546">
    <property type="entry name" value="PII_UdlTrfase/GS_AdlTrfase"/>
</dbReference>
<dbReference type="InterPro" id="IPR010043">
    <property type="entry name" value="UTase/UR"/>
</dbReference>
<dbReference type="NCBIfam" id="NF002895">
    <property type="entry name" value="PRK03381.1"/>
    <property type="match status" value="1"/>
</dbReference>
<dbReference type="NCBIfam" id="TIGR01693">
    <property type="entry name" value="UTase_glnD"/>
    <property type="match status" value="1"/>
</dbReference>
<dbReference type="PANTHER" id="PTHR47320">
    <property type="entry name" value="BIFUNCTIONAL URIDYLYLTRANSFERASE/URIDYLYL-REMOVING ENZYME"/>
    <property type="match status" value="1"/>
</dbReference>
<dbReference type="PANTHER" id="PTHR47320:SF1">
    <property type="entry name" value="BIFUNCTIONAL URIDYLYLTRANSFERASE_URIDYLYL-REMOVING ENZYME"/>
    <property type="match status" value="1"/>
</dbReference>
<dbReference type="Pfam" id="PF08335">
    <property type="entry name" value="GlnD_UR_UTase"/>
    <property type="match status" value="1"/>
</dbReference>
<dbReference type="Pfam" id="PF01966">
    <property type="entry name" value="HD"/>
    <property type="match status" value="1"/>
</dbReference>
<dbReference type="PIRSF" id="PIRSF006288">
    <property type="entry name" value="PII_uridyltransf"/>
    <property type="match status" value="1"/>
</dbReference>
<dbReference type="SMART" id="SM00471">
    <property type="entry name" value="HDc"/>
    <property type="match status" value="1"/>
</dbReference>
<dbReference type="SUPFAM" id="SSF55021">
    <property type="entry name" value="ACT-like"/>
    <property type="match status" value="1"/>
</dbReference>
<dbReference type="SUPFAM" id="SSF109604">
    <property type="entry name" value="HD-domain/PDEase-like"/>
    <property type="match status" value="1"/>
</dbReference>
<dbReference type="SUPFAM" id="SSF81301">
    <property type="entry name" value="Nucleotidyltransferase"/>
    <property type="match status" value="1"/>
</dbReference>
<dbReference type="SUPFAM" id="SSF81593">
    <property type="entry name" value="Nucleotidyltransferase substrate binding subunit/domain"/>
    <property type="match status" value="1"/>
</dbReference>
<dbReference type="PROSITE" id="PS51671">
    <property type="entry name" value="ACT"/>
    <property type="match status" value="2"/>
</dbReference>
<dbReference type="PROSITE" id="PS51831">
    <property type="entry name" value="HD"/>
    <property type="match status" value="1"/>
</dbReference>
<gene>
    <name evidence="2" type="primary">glnD</name>
    <name type="ordered locus">MT2986</name>
</gene>
<feature type="chain" id="PRO_0000427199" description="Bifunctional uridylyltransferase/uridylyl-removing enzyme">
    <location>
        <begin position="1"/>
        <end position="808"/>
    </location>
</feature>
<feature type="domain" description="HD" evidence="3">
    <location>
        <begin position="430"/>
        <end position="544"/>
    </location>
</feature>
<feature type="domain" description="ACT 1" evidence="2">
    <location>
        <begin position="610"/>
        <end position="686"/>
    </location>
</feature>
<feature type="domain" description="ACT 2" evidence="2">
    <location>
        <begin position="730"/>
        <end position="805"/>
    </location>
</feature>
<feature type="region of interest" description="Uridylyltransferase">
    <location>
        <begin position="1"/>
        <end position="315"/>
    </location>
</feature>
<feature type="region of interest" description="Uridylyl-removing">
    <location>
        <begin position="316"/>
        <end position="609"/>
    </location>
</feature>